<dbReference type="EMBL" id="AJ299404">
    <property type="protein sequence ID" value="CAC13978.1"/>
    <property type="molecule type" value="mRNA"/>
</dbReference>
<dbReference type="EMBL" id="AK007814">
    <property type="protein sequence ID" value="BAB25279.1"/>
    <property type="molecule type" value="mRNA"/>
</dbReference>
<dbReference type="EMBL" id="AK009693">
    <property type="protein sequence ID" value="BAB26443.1"/>
    <property type="molecule type" value="mRNA"/>
</dbReference>
<dbReference type="EMBL" id="AK017908">
    <property type="protein sequence ID" value="BAB30998.1"/>
    <property type="molecule type" value="mRNA"/>
</dbReference>
<dbReference type="EMBL" id="AK151048">
    <property type="protein sequence ID" value="BAE30065.1"/>
    <property type="molecule type" value="mRNA"/>
</dbReference>
<dbReference type="EMBL" id="AK152243">
    <property type="protein sequence ID" value="BAE31066.1"/>
    <property type="molecule type" value="mRNA"/>
</dbReference>
<dbReference type="EMBL" id="AK152358">
    <property type="protein sequence ID" value="BAE31149.1"/>
    <property type="molecule type" value="mRNA"/>
</dbReference>
<dbReference type="EMBL" id="AK152484">
    <property type="protein sequence ID" value="BAE31256.1"/>
    <property type="molecule type" value="mRNA"/>
</dbReference>
<dbReference type="EMBL" id="AK153391">
    <property type="protein sequence ID" value="BAE31955.1"/>
    <property type="molecule type" value="mRNA"/>
</dbReference>
<dbReference type="EMBL" id="AK170296">
    <property type="protein sequence ID" value="BAE41695.1"/>
    <property type="molecule type" value="mRNA"/>
</dbReference>
<dbReference type="EMBL" id="AK172355">
    <property type="protein sequence ID" value="BAE42964.1"/>
    <property type="molecule type" value="mRNA"/>
</dbReference>
<dbReference type="EMBL" id="BC071216">
    <property type="protein sequence ID" value="AAH71216.1"/>
    <property type="molecule type" value="mRNA"/>
</dbReference>
<dbReference type="CCDS" id="CCDS15394.1"/>
<dbReference type="RefSeq" id="NP_075630.2">
    <property type="nucleotide sequence ID" value="NM_023141.2"/>
</dbReference>
<dbReference type="SMR" id="Q9ER38"/>
<dbReference type="BioGRID" id="206012">
    <property type="interactions" value="4"/>
</dbReference>
<dbReference type="FunCoup" id="Q9ER38">
    <property type="interactions" value="1027"/>
</dbReference>
<dbReference type="STRING" id="10090.ENSMUSP00000078572"/>
<dbReference type="GlyConnect" id="2775">
    <property type="glycosylation" value="2 N-Linked glycans (1 site)"/>
</dbReference>
<dbReference type="GlyCosmos" id="Q9ER38">
    <property type="glycosylation" value="1 site, 2 glycans"/>
</dbReference>
<dbReference type="GlyGen" id="Q9ER38">
    <property type="glycosylation" value="3 sites, 3 N-linked glycans (1 site), 1 O-linked glycan (1 site)"/>
</dbReference>
<dbReference type="iPTMnet" id="Q9ER38"/>
<dbReference type="PhosphoSitePlus" id="Q9ER38"/>
<dbReference type="PaxDb" id="10090-ENSMUSP00000078572"/>
<dbReference type="PeptideAtlas" id="Q9ER38"/>
<dbReference type="ProteomicsDB" id="260653"/>
<dbReference type="Pumba" id="Q9ER38"/>
<dbReference type="Antibodypedia" id="20580">
    <property type="antibodies" value="138 antibodies from 23 providers"/>
</dbReference>
<dbReference type="DNASU" id="30935"/>
<dbReference type="Ensembl" id="ENSMUST00000079625.11">
    <property type="protein sequence ID" value="ENSMUSP00000078572.5"/>
    <property type="gene ID" value="ENSMUSG00000060519.12"/>
</dbReference>
<dbReference type="Ensembl" id="ENSMUST00000122242.8">
    <property type="protein sequence ID" value="ENSMUSP00000113984.2"/>
    <property type="gene ID" value="ENSMUSG00000060519.12"/>
</dbReference>
<dbReference type="Ensembl" id="ENSMUST00000188964.7">
    <property type="protein sequence ID" value="ENSMUSP00000140079.2"/>
    <property type="gene ID" value="ENSMUSG00000060519.12"/>
</dbReference>
<dbReference type="GeneID" id="30935"/>
<dbReference type="KEGG" id="mmu:30935"/>
<dbReference type="UCSC" id="uc007dcn.2">
    <property type="organism name" value="mouse"/>
</dbReference>
<dbReference type="AGR" id="MGI:1353652"/>
<dbReference type="CTD" id="64222"/>
<dbReference type="MGI" id="MGI:1353652">
    <property type="gene designation" value="Tor3a"/>
</dbReference>
<dbReference type="VEuPathDB" id="HostDB:ENSMUSG00000060519"/>
<dbReference type="eggNOG" id="KOG2170">
    <property type="taxonomic scope" value="Eukaryota"/>
</dbReference>
<dbReference type="GeneTree" id="ENSGT00950000182888"/>
<dbReference type="HOGENOM" id="CLU_053537_0_0_1"/>
<dbReference type="InParanoid" id="Q9ER38"/>
<dbReference type="OMA" id="FYCNIWE"/>
<dbReference type="OrthoDB" id="19623at2759"/>
<dbReference type="PhylomeDB" id="Q9ER38"/>
<dbReference type="TreeFam" id="TF314941"/>
<dbReference type="BioGRID-ORCS" id="30935">
    <property type="hits" value="1 hit in 78 CRISPR screens"/>
</dbReference>
<dbReference type="ChiTaRS" id="Tor3a">
    <property type="organism name" value="mouse"/>
</dbReference>
<dbReference type="PRO" id="PR:Q9ER38"/>
<dbReference type="Proteomes" id="UP000000589">
    <property type="component" value="Chromosome 1"/>
</dbReference>
<dbReference type="RNAct" id="Q9ER38">
    <property type="molecule type" value="protein"/>
</dbReference>
<dbReference type="Bgee" id="ENSMUSG00000060519">
    <property type="expression patterns" value="Expressed in mucous cell of stomach and 215 other cell types or tissues"/>
</dbReference>
<dbReference type="ExpressionAtlas" id="Q9ER38">
    <property type="expression patterns" value="baseline and differential"/>
</dbReference>
<dbReference type="GO" id="GO:0005788">
    <property type="term" value="C:endoplasmic reticulum lumen"/>
    <property type="evidence" value="ECO:0000314"/>
    <property type="project" value="MGI"/>
</dbReference>
<dbReference type="GO" id="GO:0005524">
    <property type="term" value="F:ATP binding"/>
    <property type="evidence" value="ECO:0007669"/>
    <property type="project" value="UniProtKB-KW"/>
</dbReference>
<dbReference type="GO" id="GO:0016887">
    <property type="term" value="F:ATP hydrolysis activity"/>
    <property type="evidence" value="ECO:0000250"/>
    <property type="project" value="UniProtKB"/>
</dbReference>
<dbReference type="FunFam" id="3.40.50.300:FF:001211">
    <property type="entry name" value="Torsin family 3 member A"/>
    <property type="match status" value="1"/>
</dbReference>
<dbReference type="Gene3D" id="3.40.50.300">
    <property type="entry name" value="P-loop containing nucleotide triphosphate hydrolases"/>
    <property type="match status" value="1"/>
</dbReference>
<dbReference type="InterPro" id="IPR001270">
    <property type="entry name" value="ClpA/B"/>
</dbReference>
<dbReference type="InterPro" id="IPR027417">
    <property type="entry name" value="P-loop_NTPase"/>
</dbReference>
<dbReference type="InterPro" id="IPR049337">
    <property type="entry name" value="TOR1A_C"/>
</dbReference>
<dbReference type="InterPro" id="IPR010448">
    <property type="entry name" value="Torsin"/>
</dbReference>
<dbReference type="PANTHER" id="PTHR10760">
    <property type="entry name" value="TORSIN"/>
    <property type="match status" value="1"/>
</dbReference>
<dbReference type="PANTHER" id="PTHR10760:SF3">
    <property type="entry name" value="TORSIN-3A"/>
    <property type="match status" value="1"/>
</dbReference>
<dbReference type="Pfam" id="PF21376">
    <property type="entry name" value="TOR1A_C"/>
    <property type="match status" value="1"/>
</dbReference>
<dbReference type="Pfam" id="PF06309">
    <property type="entry name" value="Torsin"/>
    <property type="match status" value="1"/>
</dbReference>
<dbReference type="PRINTS" id="PR00300">
    <property type="entry name" value="CLPPROTEASEA"/>
</dbReference>
<dbReference type="SUPFAM" id="SSF52540">
    <property type="entry name" value="P-loop containing nucleoside triphosphate hydrolases"/>
    <property type="match status" value="1"/>
</dbReference>
<comment type="subunit">
    <text evidence="4">Interacts with TOR1AIP1.</text>
</comment>
<comment type="subcellular location">
    <subcellularLocation>
        <location>Cytoplasm</location>
    </subcellularLocation>
    <subcellularLocation>
        <location evidence="1">Endoplasmic reticulum lumen</location>
    </subcellularLocation>
</comment>
<comment type="developmental stage">
    <text evidence="4">At 16 dpc, widely expressed with very low levels in heart, liver and neural tissues.</text>
</comment>
<comment type="induction">
    <text evidence="3">By interferon-alpha and interferon-gamma, in spleen and liver.</text>
</comment>
<comment type="PTM">
    <text evidence="1">N-glycosylated.</text>
</comment>
<comment type="similarity">
    <text evidence="5">Belongs to the ClpA/ClpB family. Torsin subfamily.</text>
</comment>
<protein>
    <recommendedName>
        <fullName>Torsin-3A</fullName>
    </recommendedName>
    <alternativeName>
        <fullName>ATP-dependent interferon-responsive protein</fullName>
    </alternativeName>
    <alternativeName>
        <fullName>Torsin family 3 member A</fullName>
    </alternativeName>
</protein>
<organism>
    <name type="scientific">Mus musculus</name>
    <name type="common">Mouse</name>
    <dbReference type="NCBI Taxonomy" id="10090"/>
    <lineage>
        <taxon>Eukaryota</taxon>
        <taxon>Metazoa</taxon>
        <taxon>Chordata</taxon>
        <taxon>Craniata</taxon>
        <taxon>Vertebrata</taxon>
        <taxon>Euteleostomi</taxon>
        <taxon>Mammalia</taxon>
        <taxon>Eutheria</taxon>
        <taxon>Euarchontoglires</taxon>
        <taxon>Glires</taxon>
        <taxon>Rodentia</taxon>
        <taxon>Myomorpha</taxon>
        <taxon>Muroidea</taxon>
        <taxon>Muridae</taxon>
        <taxon>Murinae</taxon>
        <taxon>Mus</taxon>
        <taxon>Mus</taxon>
    </lineage>
</organism>
<feature type="signal peptide" evidence="2">
    <location>
        <begin position="1"/>
        <end position="21"/>
    </location>
</feature>
<feature type="chain" id="PRO_0000228148" description="Torsin-3A">
    <location>
        <begin position="22"/>
        <end position="385"/>
    </location>
</feature>
<feature type="binding site" evidence="2">
    <location>
        <begin position="155"/>
        <end position="162"/>
    </location>
    <ligand>
        <name>ATP</name>
        <dbReference type="ChEBI" id="CHEBI:30616"/>
    </ligand>
</feature>
<feature type="glycosylation site" description="N-linked (GlcNAc...) asparagine" evidence="2">
    <location>
        <position position="110"/>
    </location>
</feature>
<feature type="sequence variant" evidence="3">
    <original>R</original>
    <variation>H</variation>
    <location>
        <position position="94"/>
    </location>
</feature>
<feature type="sequence conflict" description="In Ref. 2; BAB30998." evidence="5" ref="2">
    <original>L</original>
    <variation>R</variation>
    <location>
        <position position="8"/>
    </location>
</feature>
<feature type="sequence conflict" description="In Ref. 2; BAE41695." evidence="5" ref="2">
    <original>K</original>
    <variation>R</variation>
    <location>
        <position position="34"/>
    </location>
</feature>
<feature type="sequence conflict" description="In Ref. 1; CAC13978 and 2; BAE42964/BAE41695." evidence="5" ref="1 2">
    <original>K</original>
    <variation>T</variation>
    <location>
        <position position="42"/>
    </location>
</feature>
<feature type="sequence conflict" description="In Ref. 2; BAB30998." evidence="5" ref="2">
    <original>D</original>
    <variation>N</variation>
    <location>
        <position position="61"/>
    </location>
</feature>
<feature type="sequence conflict" description="In Ref. 1; CAC13978." evidence="5" ref="1">
    <original>R</original>
    <variation>C</variation>
    <location>
        <position position="119"/>
    </location>
</feature>
<feature type="sequence conflict" description="In Ref. 1; CAC13978 and 2; BAE42964/BAE41695." evidence="5" ref="1 2">
    <original>L</original>
    <variation>V</variation>
    <location>
        <position position="164"/>
    </location>
</feature>
<feature type="sequence conflict" description="In Ref. 2; BAE31955/BAE30065." evidence="5" ref="2">
    <original>D</original>
    <variation>G</variation>
    <location>
        <position position="198"/>
    </location>
</feature>
<feature type="sequence conflict" description="In Ref. 1; CAC13978." evidence="5" ref="1">
    <original>C</original>
    <variation>R</variation>
    <location>
        <position position="329"/>
    </location>
</feature>
<feature type="sequence conflict" description="In Ref. 2; BAB30998." evidence="5" ref="2">
    <original>P</original>
    <variation>PRK</variation>
    <location>
        <position position="385"/>
    </location>
</feature>
<evidence type="ECO:0000250" key="1"/>
<evidence type="ECO:0000255" key="2"/>
<evidence type="ECO:0000269" key="3">
    <source>
    </source>
</evidence>
<evidence type="ECO:0000269" key="4">
    <source>
    </source>
</evidence>
<evidence type="ECO:0000305" key="5"/>
<proteinExistence type="evidence at protein level"/>
<accession>Q9ER38</accession>
<accession>Q3T9Q6</accession>
<accession>Q3TDA9</accession>
<accession>Q3U5X1</accession>
<accession>Q3U8F2</accession>
<accession>Q9CR17</accession>
<accession>Q9CU67</accession>
<keyword id="KW-0067">ATP-binding</keyword>
<keyword id="KW-0963">Cytoplasm</keyword>
<keyword id="KW-0256">Endoplasmic reticulum</keyword>
<keyword id="KW-0325">Glycoprotein</keyword>
<keyword id="KW-0547">Nucleotide-binding</keyword>
<keyword id="KW-1185">Reference proteome</keyword>
<keyword id="KW-0732">Signal</keyword>
<sequence length="385" mass="43814">MFLGALWLLLLLPLRPPGAQGQEADEPTPWPSVKGLKEQLRKAGALSKRYWELFSCTLWPDHCEDQETPVPPLGWSLPLWGRRSLDVLTAWLCRFQDCCSGGGDCRISNNLTGLESDLRVRLHGQHLASKLVLRAVKGYLEMPQVGKALALSFHGWSGTGKNFLARILMDNLYRDGMRSDCVKMFISTFHFPHPKYVDTYKEELQRQMQETQWRCHQSTFVFDEAEKLHPGLLELLEPYLEPRSPEARGVEAPRAIFLFLSNLGGSVINEVVLSLLKAGWSREEITTQHLEVPLQAEIMEAADSSFGSSGLLKKHLIDHFIPFLPLEYCHVRLCVRDAFLGQDLPYTEETLDEIAKMMTYVPEEERLFSSQGCKSISQRINLFLP</sequence>
<gene>
    <name type="primary">Tor3a</name>
    <name type="synonym">Adir</name>
</gene>
<reference key="1">
    <citation type="journal article" date="2002" name="Genomics">
        <title>Molecular cloning of ADIR, a novel interferon responsive gene encoding a protein related to the torsins.</title>
        <authorList>
            <person name="Dron M."/>
            <person name="Meritet J.F."/>
            <person name="Dandoy-Dron F."/>
            <person name="Meyniel J.P."/>
            <person name="Maury C."/>
            <person name="Tovey M.G."/>
        </authorList>
    </citation>
    <scope>NUCLEOTIDE SEQUENCE [MRNA]</scope>
    <scope>INDUCTION</scope>
    <scope>VARIANT HIS-94</scope>
    <source>
        <tissue>Oropharynx</tissue>
        <tissue>Spleen</tissue>
    </source>
</reference>
<reference key="2">
    <citation type="journal article" date="2005" name="Science">
        <title>The transcriptional landscape of the mammalian genome.</title>
        <authorList>
            <person name="Carninci P."/>
            <person name="Kasukawa T."/>
            <person name="Katayama S."/>
            <person name="Gough J."/>
            <person name="Frith M.C."/>
            <person name="Maeda N."/>
            <person name="Oyama R."/>
            <person name="Ravasi T."/>
            <person name="Lenhard B."/>
            <person name="Wells C."/>
            <person name="Kodzius R."/>
            <person name="Shimokawa K."/>
            <person name="Bajic V.B."/>
            <person name="Brenner S.E."/>
            <person name="Batalov S."/>
            <person name="Forrest A.R."/>
            <person name="Zavolan M."/>
            <person name="Davis M.J."/>
            <person name="Wilming L.G."/>
            <person name="Aidinis V."/>
            <person name="Allen J.E."/>
            <person name="Ambesi-Impiombato A."/>
            <person name="Apweiler R."/>
            <person name="Aturaliya R.N."/>
            <person name="Bailey T.L."/>
            <person name="Bansal M."/>
            <person name="Baxter L."/>
            <person name="Beisel K.W."/>
            <person name="Bersano T."/>
            <person name="Bono H."/>
            <person name="Chalk A.M."/>
            <person name="Chiu K.P."/>
            <person name="Choudhary V."/>
            <person name="Christoffels A."/>
            <person name="Clutterbuck D.R."/>
            <person name="Crowe M.L."/>
            <person name="Dalla E."/>
            <person name="Dalrymple B.P."/>
            <person name="de Bono B."/>
            <person name="Della Gatta G."/>
            <person name="di Bernardo D."/>
            <person name="Down T."/>
            <person name="Engstrom P."/>
            <person name="Fagiolini M."/>
            <person name="Faulkner G."/>
            <person name="Fletcher C.F."/>
            <person name="Fukushima T."/>
            <person name="Furuno M."/>
            <person name="Futaki S."/>
            <person name="Gariboldi M."/>
            <person name="Georgii-Hemming P."/>
            <person name="Gingeras T.R."/>
            <person name="Gojobori T."/>
            <person name="Green R.E."/>
            <person name="Gustincich S."/>
            <person name="Harbers M."/>
            <person name="Hayashi Y."/>
            <person name="Hensch T.K."/>
            <person name="Hirokawa N."/>
            <person name="Hill D."/>
            <person name="Huminiecki L."/>
            <person name="Iacono M."/>
            <person name="Ikeo K."/>
            <person name="Iwama A."/>
            <person name="Ishikawa T."/>
            <person name="Jakt M."/>
            <person name="Kanapin A."/>
            <person name="Katoh M."/>
            <person name="Kawasawa Y."/>
            <person name="Kelso J."/>
            <person name="Kitamura H."/>
            <person name="Kitano H."/>
            <person name="Kollias G."/>
            <person name="Krishnan S.P."/>
            <person name="Kruger A."/>
            <person name="Kummerfeld S.K."/>
            <person name="Kurochkin I.V."/>
            <person name="Lareau L.F."/>
            <person name="Lazarevic D."/>
            <person name="Lipovich L."/>
            <person name="Liu J."/>
            <person name="Liuni S."/>
            <person name="McWilliam S."/>
            <person name="Madan Babu M."/>
            <person name="Madera M."/>
            <person name="Marchionni L."/>
            <person name="Matsuda H."/>
            <person name="Matsuzawa S."/>
            <person name="Miki H."/>
            <person name="Mignone F."/>
            <person name="Miyake S."/>
            <person name="Morris K."/>
            <person name="Mottagui-Tabar S."/>
            <person name="Mulder N."/>
            <person name="Nakano N."/>
            <person name="Nakauchi H."/>
            <person name="Ng P."/>
            <person name="Nilsson R."/>
            <person name="Nishiguchi S."/>
            <person name="Nishikawa S."/>
            <person name="Nori F."/>
            <person name="Ohara O."/>
            <person name="Okazaki Y."/>
            <person name="Orlando V."/>
            <person name="Pang K.C."/>
            <person name="Pavan W.J."/>
            <person name="Pavesi G."/>
            <person name="Pesole G."/>
            <person name="Petrovsky N."/>
            <person name="Piazza S."/>
            <person name="Reed J."/>
            <person name="Reid J.F."/>
            <person name="Ring B.Z."/>
            <person name="Ringwald M."/>
            <person name="Rost B."/>
            <person name="Ruan Y."/>
            <person name="Salzberg S.L."/>
            <person name="Sandelin A."/>
            <person name="Schneider C."/>
            <person name="Schoenbach C."/>
            <person name="Sekiguchi K."/>
            <person name="Semple C.A."/>
            <person name="Seno S."/>
            <person name="Sessa L."/>
            <person name="Sheng Y."/>
            <person name="Shibata Y."/>
            <person name="Shimada H."/>
            <person name="Shimada K."/>
            <person name="Silva D."/>
            <person name="Sinclair B."/>
            <person name="Sperling S."/>
            <person name="Stupka E."/>
            <person name="Sugiura K."/>
            <person name="Sultana R."/>
            <person name="Takenaka Y."/>
            <person name="Taki K."/>
            <person name="Tammoja K."/>
            <person name="Tan S.L."/>
            <person name="Tang S."/>
            <person name="Taylor M.S."/>
            <person name="Tegner J."/>
            <person name="Teichmann S.A."/>
            <person name="Ueda H.R."/>
            <person name="van Nimwegen E."/>
            <person name="Verardo R."/>
            <person name="Wei C.L."/>
            <person name="Yagi K."/>
            <person name="Yamanishi H."/>
            <person name="Zabarovsky E."/>
            <person name="Zhu S."/>
            <person name="Zimmer A."/>
            <person name="Hide W."/>
            <person name="Bult C."/>
            <person name="Grimmond S.M."/>
            <person name="Teasdale R.D."/>
            <person name="Liu E.T."/>
            <person name="Brusic V."/>
            <person name="Quackenbush J."/>
            <person name="Wahlestedt C."/>
            <person name="Mattick J.S."/>
            <person name="Hume D.A."/>
            <person name="Kai C."/>
            <person name="Sasaki D."/>
            <person name="Tomaru Y."/>
            <person name="Fukuda S."/>
            <person name="Kanamori-Katayama M."/>
            <person name="Suzuki M."/>
            <person name="Aoki J."/>
            <person name="Arakawa T."/>
            <person name="Iida J."/>
            <person name="Imamura K."/>
            <person name="Itoh M."/>
            <person name="Kato T."/>
            <person name="Kawaji H."/>
            <person name="Kawagashira N."/>
            <person name="Kawashima T."/>
            <person name="Kojima M."/>
            <person name="Kondo S."/>
            <person name="Konno H."/>
            <person name="Nakano K."/>
            <person name="Ninomiya N."/>
            <person name="Nishio T."/>
            <person name="Okada M."/>
            <person name="Plessy C."/>
            <person name="Shibata K."/>
            <person name="Shiraki T."/>
            <person name="Suzuki S."/>
            <person name="Tagami M."/>
            <person name="Waki K."/>
            <person name="Watahiki A."/>
            <person name="Okamura-Oho Y."/>
            <person name="Suzuki H."/>
            <person name="Kawai J."/>
            <person name="Hayashizaki Y."/>
        </authorList>
    </citation>
    <scope>NUCLEOTIDE SEQUENCE [LARGE SCALE MRNA]</scope>
    <source>
        <strain>C57BL/6J</strain>
        <strain>NOD</strain>
        <tissue>Bone marrow</tissue>
        <tissue>Pancreas</tissue>
        <tissue>Spleen</tissue>
        <tissue>Thymus</tissue>
        <tissue>Tongue</tissue>
    </source>
</reference>
<reference key="3">
    <citation type="journal article" date="2004" name="Genome Res.">
        <title>The status, quality, and expansion of the NIH full-length cDNA project: the Mammalian Gene Collection (MGC).</title>
        <authorList>
            <consortium name="The MGC Project Team"/>
        </authorList>
    </citation>
    <scope>NUCLEOTIDE SEQUENCE [LARGE SCALE MRNA]</scope>
    <source>
        <strain>C57BL/6J</strain>
        <tissue>Embryo</tissue>
    </source>
</reference>
<reference key="4">
    <citation type="journal article" date="2005" name="Neuron">
        <title>Loss of the dystonia-associated protein torsinA selectively disrupts the neuronal nuclear envelope.</title>
        <authorList>
            <person name="Goodchild R.E."/>
            <person name="Kim C.E."/>
            <person name="Dauer W.T."/>
        </authorList>
    </citation>
    <scope>INTERACTION WITH TOR1AIP1</scope>
    <scope>DEVELOPMENTAL STAGE</scope>
</reference>
<reference key="5">
    <citation type="journal article" date="2010" name="Cell">
        <title>A tissue-specific atlas of mouse protein phosphorylation and expression.</title>
        <authorList>
            <person name="Huttlin E.L."/>
            <person name="Jedrychowski M.P."/>
            <person name="Elias J.E."/>
            <person name="Goswami T."/>
            <person name="Rad R."/>
            <person name="Beausoleil S.A."/>
            <person name="Villen J."/>
            <person name="Haas W."/>
            <person name="Sowa M.E."/>
            <person name="Gygi S.P."/>
        </authorList>
    </citation>
    <scope>IDENTIFICATION BY MASS SPECTROMETRY [LARGE SCALE ANALYSIS]</scope>
    <source>
        <tissue>Lung</tissue>
        <tissue>Spleen</tissue>
    </source>
</reference>
<name>TOR3A_MOUSE</name>